<evidence type="ECO:0000250" key="1"/>
<evidence type="ECO:0000250" key="2">
    <source>
        <dbReference type="UniProtKB" id="P05109"/>
    </source>
</evidence>
<evidence type="ECO:0000255" key="3">
    <source>
        <dbReference type="PROSITE-ProRule" id="PRU00448"/>
    </source>
</evidence>
<evidence type="ECO:0000269" key="4">
    <source>
    </source>
</evidence>
<evidence type="ECO:0000269" key="5">
    <source>
    </source>
</evidence>
<evidence type="ECO:0000269" key="6">
    <source>
    </source>
</evidence>
<evidence type="ECO:0000269" key="7">
    <source>
    </source>
</evidence>
<evidence type="ECO:0000269" key="8">
    <source>
    </source>
</evidence>
<evidence type="ECO:0000269" key="9">
    <source>
    </source>
</evidence>
<evidence type="ECO:0000305" key="10"/>
<evidence type="ECO:0000312" key="11">
    <source>
        <dbReference type="MGI" id="MGI:88244"/>
    </source>
</evidence>
<protein>
    <recommendedName>
        <fullName evidence="10">Protein S100-A8</fullName>
    </recommendedName>
    <alternativeName>
        <fullName>Calgranulin-A</fullName>
    </alternativeName>
    <alternativeName>
        <fullName>Chemotactic cytokine CP-10</fullName>
    </alternativeName>
    <alternativeName>
        <fullName>Leukocyte L1 complex light chain</fullName>
    </alternativeName>
    <alternativeName>
        <fullName>Migration inhibitory factor-related protein 8</fullName>
        <shortName>MRP-8</shortName>
        <shortName>p8</shortName>
    </alternativeName>
    <alternativeName>
        <fullName>Pro-inflammatory S100 cytokine</fullName>
    </alternativeName>
    <alternativeName>
        <fullName>S100 calcium-binding protein A8</fullName>
    </alternativeName>
</protein>
<feature type="initiator methionine" description="Removed" evidence="5">
    <location>
        <position position="1"/>
    </location>
</feature>
<feature type="chain" id="PRO_0000143994" description="Protein S100-A8">
    <location>
        <begin position="2"/>
        <end position="89"/>
    </location>
</feature>
<feature type="domain" description="EF-hand 1" evidence="10">
    <location>
        <begin position="13"/>
        <end position="48"/>
    </location>
</feature>
<feature type="domain" description="EF-hand 2" evidence="3">
    <location>
        <begin position="46"/>
        <end position="81"/>
    </location>
</feature>
<feature type="binding site" evidence="1">
    <location>
        <position position="17"/>
    </location>
    <ligand>
        <name>Zn(2+)</name>
        <dbReference type="ChEBI" id="CHEBI:29105"/>
    </ligand>
</feature>
<feature type="binding site" evidence="1">
    <location>
        <position position="27"/>
    </location>
    <ligand>
        <name>Zn(2+)</name>
        <dbReference type="ChEBI" id="CHEBI:29105"/>
    </ligand>
</feature>
<feature type="binding site" evidence="10">
    <location>
        <position position="33"/>
    </location>
    <ligand>
        <name>Ca(2+)</name>
        <dbReference type="ChEBI" id="CHEBI:29108"/>
        <label>1</label>
        <note>low affinity</note>
    </ligand>
</feature>
<feature type="binding site" evidence="3">
    <location>
        <position position="59"/>
    </location>
    <ligand>
        <name>Ca(2+)</name>
        <dbReference type="ChEBI" id="CHEBI:29108"/>
        <label>2</label>
        <note>high affinity</note>
    </ligand>
</feature>
<feature type="binding site" evidence="3">
    <location>
        <position position="61"/>
    </location>
    <ligand>
        <name>Ca(2+)</name>
        <dbReference type="ChEBI" id="CHEBI:29108"/>
        <label>2</label>
        <note>high affinity</note>
    </ligand>
</feature>
<feature type="binding site" evidence="3">
    <location>
        <position position="63"/>
    </location>
    <ligand>
        <name>Ca(2+)</name>
        <dbReference type="ChEBI" id="CHEBI:29108"/>
        <label>2</label>
        <note>high affinity</note>
    </ligand>
</feature>
<feature type="binding site" evidence="3">
    <location>
        <position position="70"/>
    </location>
    <ligand>
        <name>Ca(2+)</name>
        <dbReference type="ChEBI" id="CHEBI:29108"/>
        <label>2</label>
        <note>high affinity</note>
    </ligand>
</feature>
<feature type="binding site" evidence="1">
    <location>
        <position position="83"/>
    </location>
    <ligand>
        <name>Zn(2+)</name>
        <dbReference type="ChEBI" id="CHEBI:29105"/>
    </ligand>
</feature>
<feature type="modified residue" description="S-nitrosocysteine" evidence="8">
    <location>
        <position position="42"/>
    </location>
</feature>
<feature type="sequence conflict" description="In Ref. 3; CAA61204." evidence="10" ref="3">
    <original>E</original>
    <variation>D</variation>
    <location>
        <position position="57"/>
    </location>
</feature>
<reference key="1">
    <citation type="journal article" date="1992" name="Blood">
        <title>Mouse MRP8 and MRP14, two intracellular calcium-binding proteins associated with the development of the myeloid lineage.</title>
        <authorList>
            <person name="Lagasse E."/>
            <person name="Weissman I.L."/>
        </authorList>
    </citation>
    <scope>NUCLEOTIDE SEQUENCE [MRNA]</scope>
    <source>
        <strain>BALB/cJ</strain>
    </source>
</reference>
<reference key="2">
    <citation type="journal article" date="1993" name="J. Immunol.">
        <title>Identification of a chemotactic domain of the pro-inflammatory S100 protein CP-10.</title>
        <authorList>
            <person name="Lackmann M."/>
            <person name="Rajasekariah P."/>
            <person name="Iismaa S.E."/>
            <person name="Jones G."/>
            <person name="Cornish C.J."/>
            <person name="Hu S."/>
            <person name="Simpson R.J."/>
            <person name="Moritz R.L."/>
            <person name="Geczy C.L."/>
        </authorList>
    </citation>
    <scope>NUCLEOTIDE SEQUENCE [MRNA]</scope>
</reference>
<reference key="3">
    <citation type="journal article" date="1996" name="Biochim. Biophys. Acta">
        <title>Molecular characterisation of the genomic locus of the mouse MRP8 gene.</title>
        <authorList>
            <person name="Nacken W.K.F."/>
            <person name="Manitz M.P."/>
            <person name="Sorg C."/>
        </authorList>
    </citation>
    <scope>NUCLEOTIDE SEQUENCE [GENOMIC DNA]</scope>
    <source>
        <strain>129/SvJ</strain>
        <tissue>Liver</tissue>
    </source>
</reference>
<reference key="4">
    <citation type="journal article" date="2004" name="Genome Res.">
        <title>The status, quality, and expansion of the NIH full-length cDNA project: the Mammalian Gene Collection (MGC).</title>
        <authorList>
            <consortium name="The MGC Project Team"/>
        </authorList>
    </citation>
    <scope>NUCLEOTIDE SEQUENCE [LARGE SCALE MRNA]</scope>
    <source>
        <strain>C57BL/6J</strain>
        <tissue>Mammary gland</tissue>
    </source>
</reference>
<reference key="5">
    <citation type="journal article" date="1992" name="J. Biol. Chem.">
        <title>Purification and structural analysis of a murine chemotactic cytokine (CP-10) with sequence homology to S100 proteins.</title>
        <authorList>
            <person name="Lackmann M."/>
            <person name="Cornish C.J."/>
            <person name="Simpson R.J."/>
            <person name="Moritz R.L."/>
            <person name="Geczy C.L."/>
        </authorList>
    </citation>
    <scope>PROTEIN SEQUENCE OF 2-77</scope>
    <source>
        <tissue>Spleen</tissue>
    </source>
</reference>
<reference key="6">
    <citation type="journal article" date="1999" name="J. Immunol.">
        <title>A null mutation in the inflammation-associated S100 protein S100A8 causes early resorption of the mouse embryo.</title>
        <authorList>
            <person name="Passey R.J."/>
            <person name="Williams E."/>
            <person name="Lichanska A.M."/>
            <person name="Wells C."/>
            <person name="Hu S."/>
            <person name="Geczy C.L."/>
            <person name="Little M.H."/>
            <person name="Hume D.A."/>
        </authorList>
    </citation>
    <scope>DISRUPTION PHENOTYPE</scope>
</reference>
<reference key="7">
    <citation type="journal article" date="2007" name="Nat. Med.">
        <title>Mrp8 and Mrp14 are endogenous activators of Toll-like receptor 4, promoting lethal, endotoxin-induced shock.</title>
        <authorList>
            <person name="Vogl T."/>
            <person name="Tenbrock K."/>
            <person name="Ludwig S."/>
            <person name="Leukert N."/>
            <person name="Ehrhardt C."/>
            <person name="van Zoelen M.A.D."/>
            <person name="Nacken W."/>
            <person name="Foell D."/>
            <person name="van der Poll T."/>
            <person name="Sorg C."/>
            <person name="Roth J."/>
        </authorList>
    </citation>
    <scope>FUNCTION</scope>
    <scope>SUBCELLULAR LOCATION</scope>
    <scope>SUBUNIT</scope>
    <scope>INTERACTION WITH TLR4 AND LY96</scope>
</reference>
<reference key="8">
    <citation type="journal article" date="2008" name="Circ. Res.">
        <title>S100A8 and S100A9 mediate endotoxin-induced cardiomyocyte dysfunction via the receptor for advanced glycation end products.</title>
        <authorList>
            <person name="Boyd J.H."/>
            <person name="Kan B."/>
            <person name="Roberts H."/>
            <person name="Wang Y."/>
            <person name="Walley K.R."/>
        </authorList>
    </citation>
    <scope>FUNCTION</scope>
    <scope>INTERACTION WITH AGER AND ATP2A2</scope>
</reference>
<reference key="9">
    <citation type="journal article" date="2008" name="J. Immunol.">
        <title>S-nitrosylated S100A8: novel anti-inflammatory properties.</title>
        <authorList>
            <person name="Lim S.Y."/>
            <person name="Raftery M."/>
            <person name="Cai H."/>
            <person name="Hsu K."/>
            <person name="Yan W.X."/>
            <person name="Hseih H.L."/>
            <person name="Watts R.N."/>
            <person name="Richardson D."/>
            <person name="Thomas S."/>
            <person name="Perry M."/>
            <person name="Geczy C.L."/>
        </authorList>
    </citation>
    <scope>S-NITROSYLATION AT CYS-42</scope>
</reference>
<reference key="10">
    <citation type="journal article" date="2009" name="Antiinflamm. Antiallergy Agents Med. Chem.">
        <title>Anti-infective protective properties of S100 calgranulins.</title>
        <authorList>
            <person name="Hsu K."/>
            <person name="Champaiboon C."/>
            <person name="Guenther B.D."/>
            <person name="Sorenson B.S."/>
            <person name="Khammanivong A."/>
            <person name="Ross K.F."/>
            <person name="Geczy C.L."/>
            <person name="Herzberg M.C."/>
        </authorList>
    </citation>
    <scope>REVIEW</scope>
</reference>
<reference key="11">
    <citation type="journal article" date="2010" name="Cell">
        <title>A tissue-specific atlas of mouse protein phosphorylation and expression.</title>
        <authorList>
            <person name="Huttlin E.L."/>
            <person name="Jedrychowski M.P."/>
            <person name="Elias J.E."/>
            <person name="Goswami T."/>
            <person name="Rad R."/>
            <person name="Beausoleil S.A."/>
            <person name="Villen J."/>
            <person name="Haas W."/>
            <person name="Sowa M.E."/>
            <person name="Gygi S.P."/>
        </authorList>
    </citation>
    <scope>IDENTIFICATION BY MASS SPECTROMETRY [LARGE SCALE ANALYSIS]</scope>
    <source>
        <tissue>Brain</tissue>
        <tissue>Heart</tissue>
        <tissue>Kidney</tissue>
        <tissue>Liver</tissue>
        <tissue>Lung</tissue>
        <tissue>Spleen</tissue>
    </source>
</reference>
<reference key="12">
    <citation type="journal article" date="2011" name="Amino Acids">
        <title>Inflammation-associated S100 proteins: new mechanisms that regulate function.</title>
        <authorList>
            <person name="Goyette J."/>
            <person name="Geczy C.L."/>
        </authorList>
    </citation>
    <scope>REVIEW</scope>
</reference>
<reference key="13">
    <citation type="journal article" date="2020" name="Cell Host Microbe">
        <title>Induction of alarmin S100A8/A9 mediates activation of aberrant neutrophils in the pathogenesis of COVID-19.</title>
        <authorList>
            <person name="Guo Q."/>
            <person name="Zhao Y."/>
            <person name="Li J."/>
            <person name="Liu J."/>
            <person name="Yang X."/>
            <person name="Guo X."/>
            <person name="Kuang M."/>
            <person name="Xia H."/>
            <person name="Zhang Z."/>
            <person name="Cao L."/>
            <person name="Luo Y."/>
            <person name="Bao L."/>
            <person name="Wang X."/>
            <person name="Wei X."/>
            <person name="Deng W."/>
            <person name="Wang N."/>
            <person name="Chen L."/>
            <person name="Chen J."/>
            <person name="Zhu H."/>
            <person name="Gao R."/>
            <person name="Qin C."/>
            <person name="Wang X."/>
            <person name="You F."/>
        </authorList>
    </citation>
    <scope>FUNCTION</scope>
    <scope>FUNCTION (MICROBIAL INFECTION)</scope>
    <scope>ACTIVITY REGULATION</scope>
</reference>
<proteinExistence type="evidence at protein level"/>
<name>S10A8_MOUSE</name>
<gene>
    <name evidence="11" type="primary">S100a8</name>
    <name type="synonym">Caga</name>
    <name type="synonym">Mrp8</name>
</gene>
<keyword id="KW-0929">Antimicrobial</keyword>
<keyword id="KW-0049">Antioxidant</keyword>
<keyword id="KW-0053">Apoptosis</keyword>
<keyword id="KW-0072">Autophagy</keyword>
<keyword id="KW-0106">Calcium</keyword>
<keyword id="KW-1003">Cell membrane</keyword>
<keyword id="KW-0145">Chemotaxis</keyword>
<keyword id="KW-0963">Cytoplasm</keyword>
<keyword id="KW-0206">Cytoskeleton</keyword>
<keyword id="KW-0903">Direct protein sequencing</keyword>
<keyword id="KW-0391">Immunity</keyword>
<keyword id="KW-0395">Inflammatory response</keyword>
<keyword id="KW-0399">Innate immunity</keyword>
<keyword id="KW-0472">Membrane</keyword>
<keyword id="KW-0479">Metal-binding</keyword>
<keyword id="KW-1185">Reference proteome</keyword>
<keyword id="KW-0677">Repeat</keyword>
<keyword id="KW-0702">S-nitrosylation</keyword>
<keyword id="KW-0964">Secreted</keyword>
<keyword id="KW-0862">Zinc</keyword>
<organism>
    <name type="scientific">Mus musculus</name>
    <name type="common">Mouse</name>
    <dbReference type="NCBI Taxonomy" id="10090"/>
    <lineage>
        <taxon>Eukaryota</taxon>
        <taxon>Metazoa</taxon>
        <taxon>Chordata</taxon>
        <taxon>Craniata</taxon>
        <taxon>Vertebrata</taxon>
        <taxon>Euteleostomi</taxon>
        <taxon>Mammalia</taxon>
        <taxon>Eutheria</taxon>
        <taxon>Euarchontoglires</taxon>
        <taxon>Glires</taxon>
        <taxon>Rodentia</taxon>
        <taxon>Myomorpha</taxon>
        <taxon>Muroidea</taxon>
        <taxon>Muridae</taxon>
        <taxon>Murinae</taxon>
        <taxon>Mus</taxon>
        <taxon>Mus</taxon>
    </lineage>
</organism>
<comment type="function">
    <text evidence="2 6 7 9">S100A8 is a calcium- and zinc-binding protein which plays a prominent role in the regulation of inflammatory processes and immune response. It can induce neutrophil chemotaxis and adhesion. Predominantly found as calprotectin (S100A8/A9) which has a wide plethora of intra- and extracellular functions. The intracellular functions include: facilitating leukocyte arachidonic acid trafficking and metabolism, modulation of the tubulin-dependent cytoskeleton during migration of phagocytes and activation of the neutrophilic NADPH-oxidase. Also participates in regulatory T-cell differentiation together with CD69. Activates NADPH-oxidase by facilitating the enzyme complex assembly at the cell membrane, transferring arachidonic acid, an essential cofactor, to the enzyme complex and S100A8 contributes to the enzyme assembly by directly binding to NCF2/P67PHOX. The extracellular functions involve pro-inflammatory, antimicrobial, oxidant-scavenging and apoptosis-inducing activities. Its pro-inflammatory activity includes recruitment of leukocytes, promotion of cytokine and chemokine production, and regulation of leukocyte adhesion and migration. Acts as an alarmin or a danger associated molecular pattern (DAMP) molecule and stimulates innate immune cells via binding to pattern recognition receptors such as Toll-like receptor 4 (TLR4) and receptor for advanced glycation endproducts (AGER). Binding to TLR4 and AGER activates the MAP-kinase and NF-kappa-B signaling pathways resulting in the amplification of the pro-inflammatory cascade. Has antimicrobial activity towards bacteria and fungi and exerts its antimicrobial activity probably via chelation of Zn(2+) which is essential for microbial growth. Can induce cell death via autophagy and apoptosis and this occurs through the cross-talk of mitochondria and lysosomes via reactive oxygen species (ROS) and the process involves BNIP3. Can regulate neutrophil number and apoptosis by an anti-apoptotic effect; regulates cell survival via ITGAM/ITGB and TLR4 and a signaling mechanism involving MEK-ERK. Its role as an oxidant scavenger has a protective role in preventing exaggerated tissue damage by scavenging oxidants. The iNOS-S100A8/A9 transnitrosylase complex is proposed to direct selective inflammatory stimulus-dependent S-nitrosylation of multiple targets such as GAPDH, ANXA5, EZR, MSN and VIM by recognizing a [IL]-x-C-x-x-[DE] motif; S100A8 seems to contribute to S-nitrosylation site selectivity (By similarity).</text>
</comment>
<comment type="function">
    <text evidence="9">(Microbial infection) Upon infection by murine coronavirus (MHV-A59), induces expansion of aberrant immature neutrophils in a TLR4-dependent manner.</text>
</comment>
<comment type="activity regulation">
    <text evidence="9">Calprotectin (S100A8/A9) activity on TLR4 signaling is inhibited by paquinimod.</text>
</comment>
<comment type="subunit">
    <text evidence="1 2 6 7">Homodimer. Preferentially exists as a heterodimer or heterotetramer with S100A9 known as calprotectin (S100A8/A9). Calprotectin (S100A8/9) interacts with CEACAM3 and tubulin filaments in a calcium-dependent manner. Heterotetrameric calprotectin (S100A8/A9) interacts with ANXA6 and associates with tubulin filaments in activated monocytes. S100A8 and calprotectin (S100A8/9) interact with NCF2/P67PHOX, RAC1 and RAC2. Calprotectin (S100A8/9) interacts with CYBA and CYBB (By similarity). S100A8 interacts with AGER, ATP2A2 and with the heterodimeric complex formed by TLR4 and LY96. Calprotectin (S100A8/9) interacts with NOS2 to form the iNOS-S100A8/A9 transnitrosylase complex (By similarity). Calprotectin (S100A8/9) interacts with CD69 (By similarity).</text>
</comment>
<comment type="subcellular location">
    <subcellularLocation>
        <location evidence="6">Secreted</location>
    </subcellularLocation>
    <subcellularLocation>
        <location evidence="1">Cytoplasm</location>
    </subcellularLocation>
    <subcellularLocation>
        <location evidence="1">Cytoplasm</location>
        <location evidence="1">Cytoskeleton</location>
    </subcellularLocation>
    <subcellularLocation>
        <location evidence="1">Cell membrane</location>
        <topology evidence="1">Peripheral membrane protein</topology>
    </subcellularLocation>
    <text>Predominantly localized in the cytoplasm. Upon elevation of the intracellular calcium level, translocated from the cytoplasm to the cytoskeleton and the cell membrane. Upon neutrophil activation or endothelial adhesion of monocytes, is secreted via a microtubule-mediated, alternative pathway.</text>
</comment>
<comment type="disruption phenotype">
    <text evidence="4">Death at an early embryonic stage due to embryo resorption, starting about 8 days after fertilization.</text>
</comment>
<comment type="miscellaneous">
    <text evidence="1">Binds two calcium ions per molecule with an affinity similar to that of the S-100 proteins.</text>
</comment>
<comment type="similarity">
    <text evidence="10">Belongs to the S-100 family.</text>
</comment>
<accession>P27005</accession>
<accession>P31724</accession>
<sequence length="89" mass="10295">MPSELEKALSNLIDVYHNYSNIQGNHHALYKNDFKKMVTTECPQFVQNINIENLFRELDINSDNAINFEEFLAMVIKVGVASHKDSHKE</sequence>
<dbReference type="EMBL" id="M83218">
    <property type="protein sequence ID" value="AAB07229.1"/>
    <property type="molecule type" value="mRNA"/>
</dbReference>
<dbReference type="EMBL" id="S57123">
    <property type="protein sequence ID" value="AAB25840.1"/>
    <property type="molecule type" value="mRNA"/>
</dbReference>
<dbReference type="EMBL" id="X87966">
    <property type="protein sequence ID" value="CAA61204.1"/>
    <property type="molecule type" value="Genomic_DNA"/>
</dbReference>
<dbReference type="EMBL" id="BC078629">
    <property type="protein sequence ID" value="AAH78629.1"/>
    <property type="molecule type" value="mRNA"/>
</dbReference>
<dbReference type="CCDS" id="CCDS38507.1"/>
<dbReference type="PIR" id="I56163">
    <property type="entry name" value="I56163"/>
</dbReference>
<dbReference type="RefSeq" id="NP_038678.1">
    <property type="nucleotide sequence ID" value="NM_013650.2"/>
</dbReference>
<dbReference type="SMR" id="P27005"/>
<dbReference type="BioGRID" id="203056">
    <property type="interactions" value="1"/>
</dbReference>
<dbReference type="ComplexPortal" id="CPX-40">
    <property type="entry name" value="Calprotectin heterotetramer"/>
</dbReference>
<dbReference type="ComplexPortal" id="CPX-41">
    <property type="entry name" value="Calprotectin heterodimer"/>
</dbReference>
<dbReference type="ComplexPortal" id="CPX-47">
    <property type="entry name" value="S100A8 complex"/>
</dbReference>
<dbReference type="ComplexPortal" id="CPX-53">
    <property type="entry name" value="iNOS-S100A8/A9 complex"/>
</dbReference>
<dbReference type="FunCoup" id="P27005">
    <property type="interactions" value="85"/>
</dbReference>
<dbReference type="IntAct" id="P27005">
    <property type="interactions" value="1"/>
</dbReference>
<dbReference type="STRING" id="10090.ENSMUSP00000064385"/>
<dbReference type="iPTMnet" id="P27005"/>
<dbReference type="PhosphoSitePlus" id="P27005"/>
<dbReference type="jPOST" id="P27005"/>
<dbReference type="PaxDb" id="10090-ENSMUSP00000064385"/>
<dbReference type="PeptideAtlas" id="P27005"/>
<dbReference type="ProteomicsDB" id="256555"/>
<dbReference type="Antibodypedia" id="3463">
    <property type="antibodies" value="1277 antibodies from 43 providers"/>
</dbReference>
<dbReference type="DNASU" id="20201"/>
<dbReference type="Ensembl" id="ENSMUST00000069927.10">
    <property type="protein sequence ID" value="ENSMUSP00000064385.9"/>
    <property type="gene ID" value="ENSMUSG00000056054.10"/>
</dbReference>
<dbReference type="GeneID" id="20201"/>
<dbReference type="KEGG" id="mmu:20201"/>
<dbReference type="UCSC" id="uc008qdd.1">
    <property type="organism name" value="mouse"/>
</dbReference>
<dbReference type="AGR" id="MGI:88244"/>
<dbReference type="CTD" id="6279"/>
<dbReference type="MGI" id="MGI:88244">
    <property type="gene designation" value="S100a8"/>
</dbReference>
<dbReference type="VEuPathDB" id="HostDB:ENSMUSG00000056054"/>
<dbReference type="eggNOG" id="ENOG502SA01">
    <property type="taxonomic scope" value="Eukaryota"/>
</dbReference>
<dbReference type="GeneTree" id="ENSGT00910000144329"/>
<dbReference type="HOGENOM" id="CLU_138624_6_0_1"/>
<dbReference type="InParanoid" id="P27005"/>
<dbReference type="OMA" id="NYHAIYR"/>
<dbReference type="OrthoDB" id="26525at2759"/>
<dbReference type="PhylomeDB" id="P27005"/>
<dbReference type="TreeFam" id="TF332727"/>
<dbReference type="Reactome" id="R-MMU-5668599">
    <property type="pathway name" value="RHO GTPases Activate NADPH Oxidases"/>
</dbReference>
<dbReference type="Reactome" id="R-MMU-5686938">
    <property type="pathway name" value="Regulation of TLR by endogenous ligand"/>
</dbReference>
<dbReference type="Reactome" id="R-MMU-6798695">
    <property type="pathway name" value="Neutrophil degranulation"/>
</dbReference>
<dbReference type="Reactome" id="R-MMU-6799990">
    <property type="pathway name" value="Metal sequestration by antimicrobial proteins"/>
</dbReference>
<dbReference type="BioGRID-ORCS" id="20201">
    <property type="hits" value="2 hits in 75 CRISPR screens"/>
</dbReference>
<dbReference type="PRO" id="PR:P27005"/>
<dbReference type="Proteomes" id="UP000000589">
    <property type="component" value="Chromosome 3"/>
</dbReference>
<dbReference type="RNAct" id="P27005">
    <property type="molecule type" value="protein"/>
</dbReference>
<dbReference type="Bgee" id="ENSMUSG00000056054">
    <property type="expression patterns" value="Expressed in granulocyte and 157 other cell types or tissues"/>
</dbReference>
<dbReference type="ExpressionAtlas" id="P27005">
    <property type="expression patterns" value="baseline and differential"/>
</dbReference>
<dbReference type="GO" id="GO:1990660">
    <property type="term" value="C:calprotectin complex"/>
    <property type="evidence" value="ECO:0000266"/>
    <property type="project" value="ComplexPortal"/>
</dbReference>
<dbReference type="GO" id="GO:0005829">
    <property type="term" value="C:cytosol"/>
    <property type="evidence" value="ECO:0007669"/>
    <property type="project" value="Ensembl"/>
</dbReference>
<dbReference type="GO" id="GO:0005615">
    <property type="term" value="C:extracellular space"/>
    <property type="evidence" value="ECO:0007669"/>
    <property type="project" value="Ensembl"/>
</dbReference>
<dbReference type="GO" id="GO:0045111">
    <property type="term" value="C:intermediate filament cytoskeleton"/>
    <property type="evidence" value="ECO:0007669"/>
    <property type="project" value="Ensembl"/>
</dbReference>
<dbReference type="GO" id="GO:0005886">
    <property type="term" value="C:plasma membrane"/>
    <property type="evidence" value="ECO:0007669"/>
    <property type="project" value="UniProtKB-SubCell"/>
</dbReference>
<dbReference type="GO" id="GO:1990661">
    <property type="term" value="C:S100A8 complex"/>
    <property type="evidence" value="ECO:0000266"/>
    <property type="project" value="ComplexPortal"/>
</dbReference>
<dbReference type="GO" id="GO:0016209">
    <property type="term" value="F:antioxidant activity"/>
    <property type="evidence" value="ECO:0007669"/>
    <property type="project" value="UniProtKB-KW"/>
</dbReference>
<dbReference type="GO" id="GO:0005509">
    <property type="term" value="F:calcium ion binding"/>
    <property type="evidence" value="ECO:0007669"/>
    <property type="project" value="InterPro"/>
</dbReference>
<dbReference type="GO" id="GO:0006915">
    <property type="term" value="P:apoptotic process"/>
    <property type="evidence" value="ECO:0007669"/>
    <property type="project" value="UniProtKB-KW"/>
</dbReference>
<dbReference type="GO" id="GO:0014002">
    <property type="term" value="P:astrocyte development"/>
    <property type="evidence" value="ECO:0000316"/>
    <property type="project" value="MGI"/>
</dbReference>
<dbReference type="GO" id="GO:0006914">
    <property type="term" value="P:autophagy"/>
    <property type="evidence" value="ECO:0000250"/>
    <property type="project" value="UniProtKB"/>
</dbReference>
<dbReference type="GO" id="GO:0045087">
    <property type="term" value="P:innate immune response"/>
    <property type="evidence" value="ECO:0007669"/>
    <property type="project" value="UniProtKB-KW"/>
</dbReference>
<dbReference type="GO" id="GO:0002523">
    <property type="term" value="P:leukocyte migration involved in inflammatory response"/>
    <property type="evidence" value="ECO:0000250"/>
    <property type="project" value="UniProtKB"/>
</dbReference>
<dbReference type="GO" id="GO:0070488">
    <property type="term" value="P:neutrophil aggregation"/>
    <property type="evidence" value="ECO:0000250"/>
    <property type="project" value="UniProtKB"/>
</dbReference>
<dbReference type="GO" id="GO:0030593">
    <property type="term" value="P:neutrophil chemotaxis"/>
    <property type="evidence" value="ECO:0000250"/>
    <property type="project" value="UniProtKB"/>
</dbReference>
<dbReference type="GO" id="GO:0002790">
    <property type="term" value="P:peptide secretion"/>
    <property type="evidence" value="ECO:0000314"/>
    <property type="project" value="MGI"/>
</dbReference>
<dbReference type="GO" id="GO:0050729">
    <property type="term" value="P:positive regulation of inflammatory response"/>
    <property type="evidence" value="ECO:0000250"/>
    <property type="project" value="UniProtKB"/>
</dbReference>
<dbReference type="GO" id="GO:2001244">
    <property type="term" value="P:positive regulation of intrinsic apoptotic signaling pathway"/>
    <property type="evidence" value="ECO:0000250"/>
    <property type="project" value="UniProtKB"/>
</dbReference>
<dbReference type="GO" id="GO:0002793">
    <property type="term" value="P:positive regulation of peptide secretion"/>
    <property type="evidence" value="ECO:0000314"/>
    <property type="project" value="MGI"/>
</dbReference>
<dbReference type="GO" id="GO:0034121">
    <property type="term" value="P:regulation of toll-like receptor signaling pathway"/>
    <property type="evidence" value="ECO:0000303"/>
    <property type="project" value="ComplexPortal"/>
</dbReference>
<dbReference type="CDD" id="cd05030">
    <property type="entry name" value="calgranulins"/>
    <property type="match status" value="1"/>
</dbReference>
<dbReference type="Gene3D" id="1.10.238.10">
    <property type="entry name" value="EF-hand"/>
    <property type="match status" value="1"/>
</dbReference>
<dbReference type="InterPro" id="IPR011992">
    <property type="entry name" value="EF-hand-dom_pair"/>
</dbReference>
<dbReference type="InterPro" id="IPR018247">
    <property type="entry name" value="EF_Hand_1_Ca_BS"/>
</dbReference>
<dbReference type="InterPro" id="IPR002048">
    <property type="entry name" value="EF_hand_dom"/>
</dbReference>
<dbReference type="InterPro" id="IPR001751">
    <property type="entry name" value="S100/CaBP7/8-like_CS"/>
</dbReference>
<dbReference type="InterPro" id="IPR013787">
    <property type="entry name" value="S100_Ca-bd_sub"/>
</dbReference>
<dbReference type="PANTHER" id="PTHR11639:SF5">
    <property type="entry name" value="PROTEIN S100-A8"/>
    <property type="match status" value="1"/>
</dbReference>
<dbReference type="PANTHER" id="PTHR11639">
    <property type="entry name" value="S100 CALCIUM-BINDING PROTEIN"/>
    <property type="match status" value="1"/>
</dbReference>
<dbReference type="Pfam" id="PF01023">
    <property type="entry name" value="S_100"/>
    <property type="match status" value="1"/>
</dbReference>
<dbReference type="SMART" id="SM00054">
    <property type="entry name" value="EFh"/>
    <property type="match status" value="1"/>
</dbReference>
<dbReference type="SMART" id="SM01394">
    <property type="entry name" value="S_100"/>
    <property type="match status" value="1"/>
</dbReference>
<dbReference type="SUPFAM" id="SSF47473">
    <property type="entry name" value="EF-hand"/>
    <property type="match status" value="1"/>
</dbReference>
<dbReference type="PROSITE" id="PS00018">
    <property type="entry name" value="EF_HAND_1"/>
    <property type="match status" value="1"/>
</dbReference>
<dbReference type="PROSITE" id="PS50222">
    <property type="entry name" value="EF_HAND_2"/>
    <property type="match status" value="1"/>
</dbReference>
<dbReference type="PROSITE" id="PS00303">
    <property type="entry name" value="S100_CABP"/>
    <property type="match status" value="1"/>
</dbReference>